<keyword id="KW-0067">ATP-binding</keyword>
<keyword id="KW-0963">Cytoplasm</keyword>
<keyword id="KW-0347">Helicase</keyword>
<keyword id="KW-0378">Hydrolase</keyword>
<keyword id="KW-0547">Nucleotide-binding</keyword>
<keyword id="KW-0694">RNA-binding</keyword>
<dbReference type="EC" id="3.6.4.13" evidence="1"/>
<dbReference type="EMBL" id="CP000627">
    <property type="protein sequence ID" value="ABQ21168.1"/>
    <property type="molecule type" value="Genomic_DNA"/>
</dbReference>
<dbReference type="EMBL" id="CP001235">
    <property type="protein sequence ID" value="ACP08374.1"/>
    <property type="molecule type" value="Genomic_DNA"/>
</dbReference>
<dbReference type="RefSeq" id="WP_000750771.1">
    <property type="nucleotide sequence ID" value="NZ_JAACZH010000020.1"/>
</dbReference>
<dbReference type="SMR" id="A5F3R4"/>
<dbReference type="GeneID" id="69720972"/>
<dbReference type="KEGG" id="vco:VC0395_A2697"/>
<dbReference type="KEGG" id="vcr:VC395_0349"/>
<dbReference type="PATRIC" id="fig|345073.21.peg.336"/>
<dbReference type="eggNOG" id="COG0513">
    <property type="taxonomic scope" value="Bacteria"/>
</dbReference>
<dbReference type="HOGENOM" id="CLU_003041_28_3_6"/>
<dbReference type="OrthoDB" id="9805696at2"/>
<dbReference type="Proteomes" id="UP000000249">
    <property type="component" value="Chromosome 2"/>
</dbReference>
<dbReference type="GO" id="GO:0005829">
    <property type="term" value="C:cytosol"/>
    <property type="evidence" value="ECO:0007669"/>
    <property type="project" value="TreeGrafter"/>
</dbReference>
<dbReference type="GO" id="GO:0005524">
    <property type="term" value="F:ATP binding"/>
    <property type="evidence" value="ECO:0007669"/>
    <property type="project" value="UniProtKB-UniRule"/>
</dbReference>
<dbReference type="GO" id="GO:0016887">
    <property type="term" value="F:ATP hydrolysis activity"/>
    <property type="evidence" value="ECO:0007669"/>
    <property type="project" value="RHEA"/>
</dbReference>
<dbReference type="GO" id="GO:0003723">
    <property type="term" value="F:RNA binding"/>
    <property type="evidence" value="ECO:0007669"/>
    <property type="project" value="UniProtKB-UniRule"/>
</dbReference>
<dbReference type="GO" id="GO:0003724">
    <property type="term" value="F:RNA helicase activity"/>
    <property type="evidence" value="ECO:0007669"/>
    <property type="project" value="UniProtKB-UniRule"/>
</dbReference>
<dbReference type="GO" id="GO:0006401">
    <property type="term" value="P:RNA catabolic process"/>
    <property type="evidence" value="ECO:0007669"/>
    <property type="project" value="UniProtKB-UniRule"/>
</dbReference>
<dbReference type="CDD" id="cd00268">
    <property type="entry name" value="DEADc"/>
    <property type="match status" value="1"/>
</dbReference>
<dbReference type="CDD" id="cd18787">
    <property type="entry name" value="SF2_C_DEAD"/>
    <property type="match status" value="1"/>
</dbReference>
<dbReference type="FunFam" id="3.40.50.300:FF:000008">
    <property type="entry name" value="ATP-dependent RNA helicase RhlB"/>
    <property type="match status" value="1"/>
</dbReference>
<dbReference type="FunFam" id="3.40.50.300:FF:000312">
    <property type="entry name" value="ATP-dependent RNA helicase RhlB"/>
    <property type="match status" value="1"/>
</dbReference>
<dbReference type="Gene3D" id="3.40.50.300">
    <property type="entry name" value="P-loop containing nucleotide triphosphate hydrolases"/>
    <property type="match status" value="2"/>
</dbReference>
<dbReference type="HAMAP" id="MF_00661">
    <property type="entry name" value="DEAD_helicase_RhlB"/>
    <property type="match status" value="1"/>
</dbReference>
<dbReference type="InterPro" id="IPR011545">
    <property type="entry name" value="DEAD/DEAH_box_helicase_dom"/>
</dbReference>
<dbReference type="InterPro" id="IPR050079">
    <property type="entry name" value="DEAD_box_RNA_helicase"/>
</dbReference>
<dbReference type="InterPro" id="IPR014001">
    <property type="entry name" value="Helicase_ATP-bd"/>
</dbReference>
<dbReference type="InterPro" id="IPR001650">
    <property type="entry name" value="Helicase_C-like"/>
</dbReference>
<dbReference type="InterPro" id="IPR027417">
    <property type="entry name" value="P-loop_NTPase"/>
</dbReference>
<dbReference type="InterPro" id="IPR000629">
    <property type="entry name" value="RNA-helicase_DEAD-box_CS"/>
</dbReference>
<dbReference type="InterPro" id="IPR023554">
    <property type="entry name" value="RNA_helicase_ATP-dep_RhlB"/>
</dbReference>
<dbReference type="InterPro" id="IPR014014">
    <property type="entry name" value="RNA_helicase_DEAD_Q_motif"/>
</dbReference>
<dbReference type="NCBIfam" id="NF003419">
    <property type="entry name" value="PRK04837.1"/>
    <property type="match status" value="1"/>
</dbReference>
<dbReference type="PANTHER" id="PTHR47959:SF10">
    <property type="entry name" value="ATP-DEPENDENT RNA HELICASE RHLB"/>
    <property type="match status" value="1"/>
</dbReference>
<dbReference type="PANTHER" id="PTHR47959">
    <property type="entry name" value="ATP-DEPENDENT RNA HELICASE RHLE-RELATED"/>
    <property type="match status" value="1"/>
</dbReference>
<dbReference type="Pfam" id="PF00270">
    <property type="entry name" value="DEAD"/>
    <property type="match status" value="1"/>
</dbReference>
<dbReference type="Pfam" id="PF00271">
    <property type="entry name" value="Helicase_C"/>
    <property type="match status" value="1"/>
</dbReference>
<dbReference type="SMART" id="SM00487">
    <property type="entry name" value="DEXDc"/>
    <property type="match status" value="1"/>
</dbReference>
<dbReference type="SMART" id="SM00490">
    <property type="entry name" value="HELICc"/>
    <property type="match status" value="1"/>
</dbReference>
<dbReference type="SUPFAM" id="SSF52540">
    <property type="entry name" value="P-loop containing nucleoside triphosphate hydrolases"/>
    <property type="match status" value="1"/>
</dbReference>
<dbReference type="PROSITE" id="PS00039">
    <property type="entry name" value="DEAD_ATP_HELICASE"/>
    <property type="match status" value="1"/>
</dbReference>
<dbReference type="PROSITE" id="PS51192">
    <property type="entry name" value="HELICASE_ATP_BIND_1"/>
    <property type="match status" value="1"/>
</dbReference>
<dbReference type="PROSITE" id="PS51194">
    <property type="entry name" value="HELICASE_CTER"/>
    <property type="match status" value="1"/>
</dbReference>
<dbReference type="PROSITE" id="PS51195">
    <property type="entry name" value="Q_MOTIF"/>
    <property type="match status" value="1"/>
</dbReference>
<protein>
    <recommendedName>
        <fullName evidence="1">ATP-dependent RNA helicase RhlB</fullName>
        <ecNumber evidence="1">3.6.4.13</ecNumber>
    </recommendedName>
</protein>
<feature type="chain" id="PRO_1000082876" description="ATP-dependent RNA helicase RhlB">
    <location>
        <begin position="1"/>
        <end position="438"/>
    </location>
</feature>
<feature type="domain" description="Helicase ATP-binding" evidence="1">
    <location>
        <begin position="40"/>
        <end position="219"/>
    </location>
</feature>
<feature type="domain" description="Helicase C-terminal" evidence="1">
    <location>
        <begin position="245"/>
        <end position="390"/>
    </location>
</feature>
<feature type="region of interest" description="Disordered" evidence="2">
    <location>
        <begin position="394"/>
        <end position="438"/>
    </location>
</feature>
<feature type="short sequence motif" description="Q motif">
    <location>
        <begin position="9"/>
        <end position="37"/>
    </location>
</feature>
<feature type="short sequence motif" description="DEAD box">
    <location>
        <begin position="165"/>
        <end position="168"/>
    </location>
</feature>
<feature type="compositionally biased region" description="Low complexity" evidence="2">
    <location>
        <begin position="406"/>
        <end position="423"/>
    </location>
</feature>
<feature type="compositionally biased region" description="Basic residues" evidence="2">
    <location>
        <begin position="424"/>
        <end position="438"/>
    </location>
</feature>
<feature type="binding site" evidence="1">
    <location>
        <begin position="53"/>
        <end position="60"/>
    </location>
    <ligand>
        <name>ATP</name>
        <dbReference type="ChEBI" id="CHEBI:30616"/>
    </ligand>
</feature>
<sequence>MKKTHITEHKFADFGLQPQVIDGLEKKGFVYCTPIQALALPVLLSGQDIAGQAQTGTGKTLAFLTATFNHLLTTPAAEGRAETQPRAIIMAPTRELAIQIFNDAEPLLASTGLKAALAYGGESYDKQLAKLQSGVDILIGTTGRIIDFYKQRVFNLNHIQAVVLDEADRMFDLGFIKDIRFLFRRMPEPKDRLNMLFSATLSYRVQELAFEHMNNPEHVVVEPEQKTGHRIQEELFYPSNEHKMALLQTLIEEEWPDRAIIFANTKHRCEQIWAHLAADNHRVGLLTGDVPQKKRERILEQFTQGDVDILVATDVAARGLHIPQVTHVFNYDLPDDCEDYVHRIGRTGRAGASGHSISFACEEYAINLPAIESYIEHAIPTSDYDPSALLTDLPAPLSLRSSPQQRRTNTAGSRNSNNGGNRKPQQRRPRAPRPKKEA</sequence>
<proteinExistence type="inferred from homology"/>
<name>RHLB_VIBC3</name>
<accession>A5F3R4</accession>
<accession>C3M3W6</accession>
<evidence type="ECO:0000255" key="1">
    <source>
        <dbReference type="HAMAP-Rule" id="MF_00661"/>
    </source>
</evidence>
<evidence type="ECO:0000256" key="2">
    <source>
        <dbReference type="SAM" id="MobiDB-lite"/>
    </source>
</evidence>
<comment type="function">
    <text evidence="1">DEAD-box RNA helicase involved in RNA degradation. Has RNA-dependent ATPase activity and unwinds double-stranded RNA.</text>
</comment>
<comment type="catalytic activity">
    <reaction evidence="1">
        <text>ATP + H2O = ADP + phosphate + H(+)</text>
        <dbReference type="Rhea" id="RHEA:13065"/>
        <dbReference type="ChEBI" id="CHEBI:15377"/>
        <dbReference type="ChEBI" id="CHEBI:15378"/>
        <dbReference type="ChEBI" id="CHEBI:30616"/>
        <dbReference type="ChEBI" id="CHEBI:43474"/>
        <dbReference type="ChEBI" id="CHEBI:456216"/>
        <dbReference type="EC" id="3.6.4.13"/>
    </reaction>
</comment>
<comment type="subunit">
    <text evidence="1">Component of the RNA degradosome, which is a multiprotein complex involved in RNA processing and mRNA degradation.</text>
</comment>
<comment type="subcellular location">
    <subcellularLocation>
        <location evidence="1">Cytoplasm</location>
    </subcellularLocation>
</comment>
<comment type="similarity">
    <text evidence="1">Belongs to the DEAD box helicase family. RhlB subfamily.</text>
</comment>
<reference key="1">
    <citation type="submission" date="2007-03" db="EMBL/GenBank/DDBJ databases">
        <authorList>
            <person name="Heidelberg J."/>
        </authorList>
    </citation>
    <scope>NUCLEOTIDE SEQUENCE [LARGE SCALE GENOMIC DNA]</scope>
    <source>
        <strain>ATCC 39541 / Classical Ogawa 395 / O395</strain>
    </source>
</reference>
<reference key="2">
    <citation type="journal article" date="2008" name="PLoS ONE">
        <title>A recalibrated molecular clock and independent origins for the cholera pandemic clones.</title>
        <authorList>
            <person name="Feng L."/>
            <person name="Reeves P.R."/>
            <person name="Lan R."/>
            <person name="Ren Y."/>
            <person name="Gao C."/>
            <person name="Zhou Z."/>
            <person name="Ren Y."/>
            <person name="Cheng J."/>
            <person name="Wang W."/>
            <person name="Wang J."/>
            <person name="Qian W."/>
            <person name="Li D."/>
            <person name="Wang L."/>
        </authorList>
    </citation>
    <scope>NUCLEOTIDE SEQUENCE [LARGE SCALE GENOMIC DNA]</scope>
    <source>
        <strain>ATCC 39541 / Classical Ogawa 395 / O395</strain>
    </source>
</reference>
<gene>
    <name evidence="1" type="primary">rhlB</name>
    <name type="ordered locus">VC0395_A2697</name>
    <name type="ordered locus">VC395_0349</name>
</gene>
<organism>
    <name type="scientific">Vibrio cholerae serotype O1 (strain ATCC 39541 / Classical Ogawa 395 / O395)</name>
    <dbReference type="NCBI Taxonomy" id="345073"/>
    <lineage>
        <taxon>Bacteria</taxon>
        <taxon>Pseudomonadati</taxon>
        <taxon>Pseudomonadota</taxon>
        <taxon>Gammaproteobacteria</taxon>
        <taxon>Vibrionales</taxon>
        <taxon>Vibrionaceae</taxon>
        <taxon>Vibrio</taxon>
    </lineage>
</organism>